<accession>Q53083</accession>
<gene>
    <name evidence="1" type="primary">prcB2</name>
</gene>
<keyword id="KW-0068">Autocatalytic cleavage</keyword>
<keyword id="KW-0963">Cytoplasm</keyword>
<keyword id="KW-0903">Direct protein sequencing</keyword>
<keyword id="KW-0378">Hydrolase</keyword>
<keyword id="KW-0645">Protease</keyword>
<keyword id="KW-0647">Proteasome</keyword>
<keyword id="KW-0888">Threonine protease</keyword>
<keyword id="KW-0865">Zymogen</keyword>
<protein>
    <recommendedName>
        <fullName evidence="1">Proteasome subunit beta 2</fullName>
        <ecNumber evidence="1">3.4.25.1</ecNumber>
    </recommendedName>
    <alternativeName>
        <fullName evidence="1">20S proteasome beta subunit 2</fullName>
    </alternativeName>
    <alternativeName>
        <fullName evidence="1">Proteasome core protein PrcB 2</fullName>
    </alternativeName>
</protein>
<name>PSB2_RHOER</name>
<dbReference type="EC" id="3.4.25.1" evidence="1"/>
<dbReference type="EMBL" id="U26422">
    <property type="protein sequence ID" value="AAC45736.1"/>
    <property type="molecule type" value="Genomic_DNA"/>
</dbReference>
<dbReference type="SMR" id="Q53083"/>
<dbReference type="STRING" id="1833.XU06_14800"/>
<dbReference type="MEROPS" id="T01.005"/>
<dbReference type="OMA" id="NLGMAMQ"/>
<dbReference type="UniPathway" id="UPA00997"/>
<dbReference type="GO" id="GO:0005737">
    <property type="term" value="C:cytoplasm"/>
    <property type="evidence" value="ECO:0007669"/>
    <property type="project" value="UniProtKB-SubCell"/>
</dbReference>
<dbReference type="GO" id="GO:0019774">
    <property type="term" value="C:proteasome core complex, beta-subunit complex"/>
    <property type="evidence" value="ECO:0000314"/>
    <property type="project" value="UniProtKB"/>
</dbReference>
<dbReference type="GO" id="GO:0004175">
    <property type="term" value="F:endopeptidase activity"/>
    <property type="evidence" value="ECO:0000314"/>
    <property type="project" value="UniProtKB"/>
</dbReference>
<dbReference type="GO" id="GO:0004298">
    <property type="term" value="F:threonine-type endopeptidase activity"/>
    <property type="evidence" value="ECO:0007669"/>
    <property type="project" value="UniProtKB-UniRule"/>
</dbReference>
<dbReference type="GO" id="GO:0019941">
    <property type="term" value="P:modification-dependent protein catabolic process"/>
    <property type="evidence" value="ECO:0007669"/>
    <property type="project" value="UniProtKB-UniRule"/>
</dbReference>
<dbReference type="GO" id="GO:0010498">
    <property type="term" value="P:proteasomal protein catabolic process"/>
    <property type="evidence" value="ECO:0000314"/>
    <property type="project" value="UniProtKB"/>
</dbReference>
<dbReference type="CDD" id="cd01906">
    <property type="entry name" value="proteasome_protease_HslV"/>
    <property type="match status" value="1"/>
</dbReference>
<dbReference type="FunFam" id="3.60.20.10:FF:000046">
    <property type="entry name" value="Proteasome subunit beta"/>
    <property type="match status" value="1"/>
</dbReference>
<dbReference type="Gene3D" id="3.60.20.10">
    <property type="entry name" value="Glutamine Phosphoribosylpyrophosphate, subunit 1, domain 1"/>
    <property type="match status" value="1"/>
</dbReference>
<dbReference type="HAMAP" id="MF_02113_B">
    <property type="entry name" value="Proteasome_B_B"/>
    <property type="match status" value="1"/>
</dbReference>
<dbReference type="InterPro" id="IPR029055">
    <property type="entry name" value="Ntn_hydrolases_N"/>
</dbReference>
<dbReference type="InterPro" id="IPR001353">
    <property type="entry name" value="Proteasome_sua/b"/>
</dbReference>
<dbReference type="InterPro" id="IPR023333">
    <property type="entry name" value="Proteasome_suB-type"/>
</dbReference>
<dbReference type="InterPro" id="IPR022483">
    <property type="entry name" value="PSB_actinobac"/>
</dbReference>
<dbReference type="NCBIfam" id="TIGR03690">
    <property type="entry name" value="20S_bact_beta"/>
    <property type="match status" value="1"/>
</dbReference>
<dbReference type="PANTHER" id="PTHR32194:SF0">
    <property type="entry name" value="ATP-DEPENDENT PROTEASE SUBUNIT HSLV"/>
    <property type="match status" value="1"/>
</dbReference>
<dbReference type="PANTHER" id="PTHR32194">
    <property type="entry name" value="METALLOPROTEASE TLDD"/>
    <property type="match status" value="1"/>
</dbReference>
<dbReference type="Pfam" id="PF00227">
    <property type="entry name" value="Proteasome"/>
    <property type="match status" value="1"/>
</dbReference>
<dbReference type="SUPFAM" id="SSF56235">
    <property type="entry name" value="N-terminal nucleophile aminohydrolases (Ntn hydrolases)"/>
    <property type="match status" value="1"/>
</dbReference>
<dbReference type="PROSITE" id="PS51476">
    <property type="entry name" value="PROTEASOME_BETA_2"/>
    <property type="match status" value="1"/>
</dbReference>
<organism>
    <name type="scientific">Rhodococcus erythropolis</name>
    <name type="common">Arthrobacter picolinophilus</name>
    <dbReference type="NCBI Taxonomy" id="1833"/>
    <lineage>
        <taxon>Bacteria</taxon>
        <taxon>Bacillati</taxon>
        <taxon>Actinomycetota</taxon>
        <taxon>Actinomycetes</taxon>
        <taxon>Mycobacteriales</taxon>
        <taxon>Nocardiaceae</taxon>
        <taxon>Rhodococcus</taxon>
        <taxon>Rhodococcus erythropolis group</taxon>
    </lineage>
</organism>
<evidence type="ECO:0000255" key="1">
    <source>
        <dbReference type="HAMAP-Rule" id="MF_02113"/>
    </source>
</evidence>
<evidence type="ECO:0000269" key="2">
    <source>
    </source>
</evidence>
<evidence type="ECO:0000269" key="3">
    <source>
    </source>
</evidence>
<sequence length="292" mass="30398">MTVDRAPRITDGDTRLSFGSNLSSFSEYLRVHAPEHLPQNRFADTGGVVMGGGDVAPHGTTIVAISYAGGVLLAGDRRATMGNLIASRDVQKVYVTDDYSAAGIAGTAGIAIELVRLFAVELEHYEKIEGVPLTFDGKANRLSSMVRGNLGAAMQGLAVVPLLVGYDLDAVDPSRAGRIVSYDVVGGRYEERAGYHAVGSGSLFAKSALKKLYSPGIDEDTALRFAVEALYDAADDDSATGGPDLTRGIYPTAVTITSAGAVELSTAKAAEIAREIVAARTATASPEGESAL</sequence>
<proteinExistence type="evidence at protein level"/>
<feature type="propeptide" id="PRO_0000397126" description="Removed in mature form; by autocatalysis" evidence="1 2">
    <location>
        <begin position="1"/>
        <end position="59"/>
    </location>
</feature>
<feature type="chain" id="PRO_0000397127" description="Proteasome subunit beta 2">
    <location>
        <begin position="60"/>
        <end position="292"/>
    </location>
</feature>
<feature type="active site" description="Nucleophile" evidence="1">
    <location>
        <position position="60"/>
    </location>
</feature>
<reference key="1">
    <citation type="journal article" date="1995" name="Curr. Biol.">
        <title>The first characterization of a eubacterial proteasome: the 20S complex of Rhodococcus.</title>
        <authorList>
            <person name="Tamura T."/>
            <person name="Nagy I."/>
            <person name="Lupas A."/>
            <person name="Lottspeich F."/>
            <person name="Cejka Z."/>
            <person name="Schoofs G."/>
            <person name="Tanaka K."/>
            <person name="de Mot R."/>
            <person name="Baumeister W."/>
        </authorList>
    </citation>
    <scope>NUCLEOTIDE SEQUENCE [GENOMIC DNA]</scope>
    <scope>PROTEIN SEQUENCE OF 60-92; 139-156; 211-228 AND 269-292</scope>
    <scope>FUNCTION</scope>
    <scope>CATALYTIC ACTIVITY</scope>
    <scope>SUBSTRATE SPECIFICITY</scope>
    <scope>SUBUNIT</scope>
    <source>
        <strain>NI86/21</strain>
    </source>
</reference>
<reference key="2">
    <citation type="journal article" date="1997" name="FEBS Lett.">
        <title>Subunit topology of the Rhodococcus proteasome.</title>
        <authorList>
            <person name="Zuhl F."/>
            <person name="Tamura T."/>
            <person name="Dolenc I."/>
            <person name="Cejka Z."/>
            <person name="Nagy I."/>
            <person name="De Mot R."/>
            <person name="Baumeister W."/>
        </authorList>
    </citation>
    <scope>SUBUNIT</scope>
    <scope>FUNCTION</scope>
    <scope>CATALYTIC ACTIVITY</scope>
    <scope>SUBSTRATE SPECIFICITY</scope>
    <scope>KINETIC PARAMETERS</scope>
    <source>
        <strain>NI86/21</strain>
    </source>
</reference>
<comment type="function">
    <text evidence="1 2 3">Component of the proteasome core, a large protease complex with broad specificity involved in protein degradation. The R.erythropolis proteasomes are able to cleave oligopeptides after Tyr, Phe and Leu, very poorly after Arg but not after Glu. Thus, displays chymotrypsin-like activity, low trypsin-like activity but no caspase-like activity.</text>
</comment>
<comment type="catalytic activity">
    <reaction evidence="1 2 3">
        <text>Cleavage of peptide bonds with very broad specificity.</text>
        <dbReference type="EC" id="3.4.25.1"/>
    </reaction>
</comment>
<comment type="activity regulation">
    <text evidence="1">The formation of the proteasomal ATPase ARC-20S proteasome complex, likely via the docking of the C-termini of ARC into the intersubunit pockets in the alpha-rings, may trigger opening of the gate for substrate entry. Interconversion between the open-gate and close-gate conformations leads to a dynamic regulation of the 20S proteasome proteolysis activity.</text>
</comment>
<comment type="biophysicochemical properties">
    <kinetics>
        <KM evidence="3">61.4 uM for Suc-Leu-Leu-Val-Tyr-AMC (with the beta2-alpha1 proteasome subtype)</KM>
        <KM evidence="3">66.4 uM for Suc-Leu-Leu-Val-Tyr-AMC (with the beta2-alpha2 proteasome subtype)</KM>
        <KM evidence="3">71.2 uM for Suc-Leu-Leu-Val-Tyr-AMC (with the beta1-alpha2 proteasome subtype)</KM>
        <KM evidence="3">84.3 uM for Suc-Leu-Leu-Val-Tyr-AMC (with the beta1-alpha1 proteasome subtype)</KM>
        <text>The Vmax observed with the beta2-alpha1 proteasome subtype is 2.2-fold, 1.2-fold and 4-fold higher than that with the beta2-alpha2, beta1-alpha2 and beta1-alpha1 subtypes, respectively.</text>
    </kinetics>
</comment>
<comment type="pathway">
    <text evidence="1">Protein degradation; proteasomal Pup-dependent pathway.</text>
</comment>
<comment type="subunit">
    <text evidence="2 3">The 20S proteasome core is composed of 14 alpha and 14 beta subunits that assemble into four stacked heptameric rings, resulting in a barrel-shaped structure. The two inner rings, each composed of seven catalytic beta subunits, are sandwiched by two outer rings, each composed of seven alpha subunits. All four combinations of alpha- and beta-subunits (beta2-alpha1, beta2-alpha2, beta1-alpha2 and beta1-alpha1) yield fully assembled and proteolytically active proteasomes. The catalytic chamber with the active sites is on the inside of the barrel. Has probably a gated structure, the ends of the cylinder being occluded by the N-termini of the alpha-subunits. Is likely capped by the proteasome-associated ATPase, ARC.</text>
</comment>
<comment type="subcellular location">
    <subcellularLocation>
        <location evidence="1">Cytoplasm</location>
    </subcellularLocation>
</comment>
<comment type="similarity">
    <text evidence="1">Belongs to the peptidase T1B family.</text>
</comment>